<reference key="1">
    <citation type="journal article" date="2005" name="BMC Genomics">
        <title>Bacterial genome adaptation to niches: divergence of the potential virulence genes in three Burkholderia species of different survival strategies.</title>
        <authorList>
            <person name="Kim H.S."/>
            <person name="Schell M.A."/>
            <person name="Yu Y."/>
            <person name="Ulrich R.L."/>
            <person name="Sarria S.H."/>
            <person name="Nierman W.C."/>
            <person name="DeShazer D."/>
        </authorList>
    </citation>
    <scope>NUCLEOTIDE SEQUENCE [LARGE SCALE GENOMIC DNA]</scope>
    <source>
        <strain>ATCC 700388 / DSM 13276 / CCUG 48851 / CIP 106301 / E264</strain>
    </source>
</reference>
<feature type="chain" id="PRO_1000020579" description="tRNA dimethylallyltransferase">
    <location>
        <begin position="1"/>
        <end position="324"/>
    </location>
</feature>
<feature type="region of interest" description="Interaction with substrate tRNA" evidence="1">
    <location>
        <begin position="42"/>
        <end position="45"/>
    </location>
</feature>
<feature type="region of interest" description="Interaction with substrate tRNA" evidence="1">
    <location>
        <begin position="166"/>
        <end position="170"/>
    </location>
</feature>
<feature type="region of interest" description="Interaction with substrate tRNA" evidence="1">
    <location>
        <begin position="251"/>
        <end position="256"/>
    </location>
</feature>
<feature type="binding site" evidence="1">
    <location>
        <begin position="17"/>
        <end position="24"/>
    </location>
    <ligand>
        <name>ATP</name>
        <dbReference type="ChEBI" id="CHEBI:30616"/>
    </ligand>
</feature>
<feature type="binding site" evidence="1">
    <location>
        <begin position="19"/>
        <end position="24"/>
    </location>
    <ligand>
        <name>substrate</name>
    </ligand>
</feature>
<feature type="site" description="Interaction with substrate tRNA" evidence="1">
    <location>
        <position position="108"/>
    </location>
</feature>
<feature type="site" description="Interaction with substrate tRNA" evidence="1">
    <location>
        <position position="130"/>
    </location>
</feature>
<proteinExistence type="inferred from homology"/>
<name>MIAA_BURTA</name>
<protein>
    <recommendedName>
        <fullName evidence="1">tRNA dimethylallyltransferase</fullName>
        <ecNumber evidence="1">2.5.1.75</ecNumber>
    </recommendedName>
    <alternativeName>
        <fullName evidence="1">Dimethylallyl diphosphate:tRNA dimethylallyltransferase</fullName>
        <shortName evidence="1">DMAPP:tRNA dimethylallyltransferase</shortName>
        <shortName evidence="1">DMATase</shortName>
    </alternativeName>
    <alternativeName>
        <fullName evidence="1">Isopentenyl-diphosphate:tRNA isopentenyltransferase</fullName>
        <shortName evidence="1">IPP transferase</shortName>
        <shortName evidence="1">IPPT</shortName>
        <shortName evidence="1">IPTase</shortName>
    </alternativeName>
</protein>
<accession>Q2SYY3</accession>
<evidence type="ECO:0000255" key="1">
    <source>
        <dbReference type="HAMAP-Rule" id="MF_00185"/>
    </source>
</evidence>
<keyword id="KW-0067">ATP-binding</keyword>
<keyword id="KW-0460">Magnesium</keyword>
<keyword id="KW-0547">Nucleotide-binding</keyword>
<keyword id="KW-0808">Transferase</keyword>
<keyword id="KW-0819">tRNA processing</keyword>
<gene>
    <name evidence="1" type="primary">miaA</name>
    <name type="ordered locus">BTH_I1319</name>
</gene>
<dbReference type="EC" id="2.5.1.75" evidence="1"/>
<dbReference type="EMBL" id="CP000086">
    <property type="protein sequence ID" value="ABC38550.1"/>
    <property type="molecule type" value="Genomic_DNA"/>
</dbReference>
<dbReference type="RefSeq" id="WP_009889277.1">
    <property type="nucleotide sequence ID" value="NC_007651.1"/>
</dbReference>
<dbReference type="SMR" id="Q2SYY3"/>
<dbReference type="GeneID" id="45121063"/>
<dbReference type="KEGG" id="bte:BTH_I1319"/>
<dbReference type="HOGENOM" id="CLU_032616_0_0_4"/>
<dbReference type="Proteomes" id="UP000001930">
    <property type="component" value="Chromosome I"/>
</dbReference>
<dbReference type="GO" id="GO:0005524">
    <property type="term" value="F:ATP binding"/>
    <property type="evidence" value="ECO:0007669"/>
    <property type="project" value="UniProtKB-UniRule"/>
</dbReference>
<dbReference type="GO" id="GO:0052381">
    <property type="term" value="F:tRNA dimethylallyltransferase activity"/>
    <property type="evidence" value="ECO:0007669"/>
    <property type="project" value="UniProtKB-UniRule"/>
</dbReference>
<dbReference type="GO" id="GO:0006400">
    <property type="term" value="P:tRNA modification"/>
    <property type="evidence" value="ECO:0007669"/>
    <property type="project" value="TreeGrafter"/>
</dbReference>
<dbReference type="FunFam" id="1.10.20.140:FF:000001">
    <property type="entry name" value="tRNA dimethylallyltransferase"/>
    <property type="match status" value="1"/>
</dbReference>
<dbReference type="Gene3D" id="1.10.20.140">
    <property type="match status" value="1"/>
</dbReference>
<dbReference type="Gene3D" id="3.40.50.300">
    <property type="entry name" value="P-loop containing nucleotide triphosphate hydrolases"/>
    <property type="match status" value="1"/>
</dbReference>
<dbReference type="HAMAP" id="MF_00185">
    <property type="entry name" value="IPP_trans"/>
    <property type="match status" value="1"/>
</dbReference>
<dbReference type="InterPro" id="IPR039657">
    <property type="entry name" value="Dimethylallyltransferase"/>
</dbReference>
<dbReference type="InterPro" id="IPR018022">
    <property type="entry name" value="IPT"/>
</dbReference>
<dbReference type="InterPro" id="IPR027417">
    <property type="entry name" value="P-loop_NTPase"/>
</dbReference>
<dbReference type="NCBIfam" id="TIGR00174">
    <property type="entry name" value="miaA"/>
    <property type="match status" value="1"/>
</dbReference>
<dbReference type="PANTHER" id="PTHR11088">
    <property type="entry name" value="TRNA DIMETHYLALLYLTRANSFERASE"/>
    <property type="match status" value="1"/>
</dbReference>
<dbReference type="PANTHER" id="PTHR11088:SF60">
    <property type="entry name" value="TRNA DIMETHYLALLYLTRANSFERASE"/>
    <property type="match status" value="1"/>
</dbReference>
<dbReference type="Pfam" id="PF01715">
    <property type="entry name" value="IPPT"/>
    <property type="match status" value="1"/>
</dbReference>
<dbReference type="SUPFAM" id="SSF52540">
    <property type="entry name" value="P-loop containing nucleoside triphosphate hydrolases"/>
    <property type="match status" value="1"/>
</dbReference>
<sequence>MSESNAASVRTVACLLGPTASGKTAAALALAARRPIEIVSVDSALVYRGMDIGTAKPTREERAAVPHHLIDIVDPADAYSAAGFRADALRVVAEIAARGRTPLLAGGTMLYYKALTQGLNDLPAADPDVRATLDAEAARDGWPALHARLASVDPATAARLAPNDAQRIQRALEVYLLTGRPMSALLAAPPRNDDAAAGLRFVPVALEPSDRAVLHARIAARFDAMLEAGFIDEVERLRRRDDLHLGLPSMRCVGYRQAWEYLEGVTDYRMMRDKGIFATRQLCKRQLTWLRAMPARIVVDCCAQDATARAVDALERVLDGRTPA</sequence>
<organism>
    <name type="scientific">Burkholderia thailandensis (strain ATCC 700388 / DSM 13276 / CCUG 48851 / CIP 106301 / E264)</name>
    <dbReference type="NCBI Taxonomy" id="271848"/>
    <lineage>
        <taxon>Bacteria</taxon>
        <taxon>Pseudomonadati</taxon>
        <taxon>Pseudomonadota</taxon>
        <taxon>Betaproteobacteria</taxon>
        <taxon>Burkholderiales</taxon>
        <taxon>Burkholderiaceae</taxon>
        <taxon>Burkholderia</taxon>
        <taxon>pseudomallei group</taxon>
    </lineage>
</organism>
<comment type="function">
    <text evidence="1">Catalyzes the transfer of a dimethylallyl group onto the adenine at position 37 in tRNAs that read codons beginning with uridine, leading to the formation of N6-(dimethylallyl)adenosine (i(6)A).</text>
</comment>
<comment type="catalytic activity">
    <reaction evidence="1">
        <text>adenosine(37) in tRNA + dimethylallyl diphosphate = N(6)-dimethylallyladenosine(37) in tRNA + diphosphate</text>
        <dbReference type="Rhea" id="RHEA:26482"/>
        <dbReference type="Rhea" id="RHEA-COMP:10162"/>
        <dbReference type="Rhea" id="RHEA-COMP:10375"/>
        <dbReference type="ChEBI" id="CHEBI:33019"/>
        <dbReference type="ChEBI" id="CHEBI:57623"/>
        <dbReference type="ChEBI" id="CHEBI:74411"/>
        <dbReference type="ChEBI" id="CHEBI:74415"/>
        <dbReference type="EC" id="2.5.1.75"/>
    </reaction>
</comment>
<comment type="cofactor">
    <cofactor evidence="1">
        <name>Mg(2+)</name>
        <dbReference type="ChEBI" id="CHEBI:18420"/>
    </cofactor>
</comment>
<comment type="subunit">
    <text evidence="1">Monomer.</text>
</comment>
<comment type="similarity">
    <text evidence="1">Belongs to the IPP transferase family.</text>
</comment>